<reference key="1">
    <citation type="journal article" date="2000" name="Nature">
        <title>DNA sequence of both chromosomes of the cholera pathogen Vibrio cholerae.</title>
        <authorList>
            <person name="Heidelberg J.F."/>
            <person name="Eisen J.A."/>
            <person name="Nelson W.C."/>
            <person name="Clayton R.A."/>
            <person name="Gwinn M.L."/>
            <person name="Dodson R.J."/>
            <person name="Haft D.H."/>
            <person name="Hickey E.K."/>
            <person name="Peterson J.D."/>
            <person name="Umayam L.A."/>
            <person name="Gill S.R."/>
            <person name="Nelson K.E."/>
            <person name="Read T.D."/>
            <person name="Tettelin H."/>
            <person name="Richardson D.L."/>
            <person name="Ermolaeva M.D."/>
            <person name="Vamathevan J.J."/>
            <person name="Bass S."/>
            <person name="Qin H."/>
            <person name="Dragoi I."/>
            <person name="Sellers P."/>
            <person name="McDonald L.A."/>
            <person name="Utterback T.R."/>
            <person name="Fleischmann R.D."/>
            <person name="Nierman W.C."/>
            <person name="White O."/>
            <person name="Salzberg S.L."/>
            <person name="Smith H.O."/>
            <person name="Colwell R.R."/>
            <person name="Mekalanos J.J."/>
            <person name="Venter J.C."/>
            <person name="Fraser C.M."/>
        </authorList>
    </citation>
    <scope>NUCLEOTIDE SEQUENCE [LARGE SCALE GENOMIC DNA]</scope>
    <source>
        <strain>ATCC 39315 / El Tor Inaba N16961</strain>
    </source>
</reference>
<comment type="function">
    <text evidence="1">Phosphorylation of dTMP to form dTDP in both de novo and salvage pathways of dTTP synthesis.</text>
</comment>
<comment type="catalytic activity">
    <reaction>
        <text>dTMP + ATP = dTDP + ADP</text>
        <dbReference type="Rhea" id="RHEA:13517"/>
        <dbReference type="ChEBI" id="CHEBI:30616"/>
        <dbReference type="ChEBI" id="CHEBI:58369"/>
        <dbReference type="ChEBI" id="CHEBI:63528"/>
        <dbReference type="ChEBI" id="CHEBI:456216"/>
        <dbReference type="EC" id="2.7.4.9"/>
    </reaction>
</comment>
<comment type="similarity">
    <text evidence="3">Belongs to the thymidylate kinase family.</text>
</comment>
<gene>
    <name type="primary">tmk</name>
    <name type="ordered locus">VC_2016</name>
</gene>
<feature type="chain" id="PRO_0000155367" description="Thymidylate kinase">
    <location>
        <begin position="1"/>
        <end position="212"/>
    </location>
</feature>
<feature type="binding site" evidence="2">
    <location>
        <begin position="10"/>
        <end position="17"/>
    </location>
    <ligand>
        <name>ATP</name>
        <dbReference type="ChEBI" id="CHEBI:30616"/>
    </ligand>
</feature>
<feature type="strand" evidence="4">
    <location>
        <begin position="5"/>
        <end position="11"/>
    </location>
</feature>
<feature type="helix" evidence="4">
    <location>
        <begin position="16"/>
        <end position="29"/>
    </location>
</feature>
<feature type="strand" evidence="4">
    <location>
        <begin position="35"/>
        <end position="41"/>
    </location>
</feature>
<feature type="helix" evidence="4">
    <location>
        <begin position="45"/>
        <end position="55"/>
    </location>
</feature>
<feature type="helix" evidence="4">
    <location>
        <begin position="65"/>
        <end position="82"/>
    </location>
</feature>
<feature type="helix" evidence="4">
    <location>
        <begin position="84"/>
        <end position="89"/>
    </location>
</feature>
<feature type="strand" evidence="4">
    <location>
        <begin position="93"/>
        <end position="98"/>
    </location>
</feature>
<feature type="helix" evidence="4">
    <location>
        <begin position="100"/>
        <end position="106"/>
    </location>
</feature>
<feature type="turn" evidence="4">
    <location>
        <begin position="107"/>
        <end position="111"/>
    </location>
</feature>
<feature type="helix" evidence="4">
    <location>
        <begin position="115"/>
        <end position="126"/>
    </location>
</feature>
<feature type="strand" evidence="4">
    <location>
        <begin position="132"/>
        <end position="138"/>
    </location>
</feature>
<feature type="helix" evidence="4">
    <location>
        <begin position="141"/>
        <end position="146"/>
    </location>
</feature>
<feature type="turn" evidence="4">
    <location>
        <begin position="156"/>
        <end position="159"/>
    </location>
</feature>
<feature type="helix" evidence="4">
    <location>
        <begin position="162"/>
        <end position="178"/>
    </location>
</feature>
<feature type="strand" evidence="4">
    <location>
        <begin position="182"/>
        <end position="186"/>
    </location>
</feature>
<feature type="helix" evidence="4">
    <location>
        <begin position="191"/>
        <end position="206"/>
    </location>
</feature>
<organism>
    <name type="scientific">Vibrio cholerae serotype O1 (strain ATCC 39315 / El Tor Inaba N16961)</name>
    <dbReference type="NCBI Taxonomy" id="243277"/>
    <lineage>
        <taxon>Bacteria</taxon>
        <taxon>Pseudomonadati</taxon>
        <taxon>Pseudomonadota</taxon>
        <taxon>Gammaproteobacteria</taxon>
        <taxon>Vibrionales</taxon>
        <taxon>Vibrionaceae</taxon>
        <taxon>Vibrio</taxon>
    </lineage>
</organism>
<dbReference type="EC" id="2.7.4.9"/>
<dbReference type="EMBL" id="AE003852">
    <property type="protein sequence ID" value="AAF95164.1"/>
    <property type="molecule type" value="Genomic_DNA"/>
</dbReference>
<dbReference type="PIR" id="A82128">
    <property type="entry name" value="A82128"/>
</dbReference>
<dbReference type="RefSeq" id="NP_231650.1">
    <property type="nucleotide sequence ID" value="NC_002505.1"/>
</dbReference>
<dbReference type="RefSeq" id="WP_000991933.1">
    <property type="nucleotide sequence ID" value="NZ_LT906614.1"/>
</dbReference>
<dbReference type="PDB" id="3LV8">
    <property type="method" value="X-ray"/>
    <property type="resolution" value="1.80 A"/>
    <property type="chains" value="A=1-212"/>
</dbReference>
<dbReference type="PDB" id="3N2I">
    <property type="method" value="X-ray"/>
    <property type="resolution" value="2.25 A"/>
    <property type="chains" value="A/B=1-212"/>
</dbReference>
<dbReference type="PDBsum" id="3LV8"/>
<dbReference type="PDBsum" id="3N2I"/>
<dbReference type="SMR" id="Q9KQI2"/>
<dbReference type="STRING" id="243277.VC_2016"/>
<dbReference type="DNASU" id="2613395"/>
<dbReference type="EnsemblBacteria" id="AAF95164">
    <property type="protein sequence ID" value="AAF95164"/>
    <property type="gene ID" value="VC_2016"/>
</dbReference>
<dbReference type="KEGG" id="vch:VC_2016"/>
<dbReference type="PATRIC" id="fig|243277.26.peg.1926"/>
<dbReference type="eggNOG" id="COG0125">
    <property type="taxonomic scope" value="Bacteria"/>
</dbReference>
<dbReference type="HOGENOM" id="CLU_049131_0_1_6"/>
<dbReference type="EvolutionaryTrace" id="Q9KQI2"/>
<dbReference type="Proteomes" id="UP000000584">
    <property type="component" value="Chromosome 1"/>
</dbReference>
<dbReference type="GO" id="GO:0005737">
    <property type="term" value="C:cytoplasm"/>
    <property type="evidence" value="ECO:0000318"/>
    <property type="project" value="GO_Central"/>
</dbReference>
<dbReference type="GO" id="GO:0005829">
    <property type="term" value="C:cytosol"/>
    <property type="evidence" value="ECO:0000318"/>
    <property type="project" value="GO_Central"/>
</dbReference>
<dbReference type="GO" id="GO:0005524">
    <property type="term" value="F:ATP binding"/>
    <property type="evidence" value="ECO:0007669"/>
    <property type="project" value="UniProtKB-UniRule"/>
</dbReference>
<dbReference type="GO" id="GO:0004798">
    <property type="term" value="F:dTMP kinase activity"/>
    <property type="evidence" value="ECO:0000318"/>
    <property type="project" value="GO_Central"/>
</dbReference>
<dbReference type="GO" id="GO:0006233">
    <property type="term" value="P:dTDP biosynthetic process"/>
    <property type="evidence" value="ECO:0000318"/>
    <property type="project" value="GO_Central"/>
</dbReference>
<dbReference type="GO" id="GO:0006235">
    <property type="term" value="P:dTTP biosynthetic process"/>
    <property type="evidence" value="ECO:0000318"/>
    <property type="project" value="GO_Central"/>
</dbReference>
<dbReference type="GO" id="GO:0006227">
    <property type="term" value="P:dUDP biosynthetic process"/>
    <property type="evidence" value="ECO:0000318"/>
    <property type="project" value="GO_Central"/>
</dbReference>
<dbReference type="CDD" id="cd01672">
    <property type="entry name" value="TMPK"/>
    <property type="match status" value="1"/>
</dbReference>
<dbReference type="FunFam" id="3.40.50.300:FF:000321">
    <property type="entry name" value="Thymidylate kinase"/>
    <property type="match status" value="1"/>
</dbReference>
<dbReference type="Gene3D" id="3.40.50.300">
    <property type="entry name" value="P-loop containing nucleotide triphosphate hydrolases"/>
    <property type="match status" value="1"/>
</dbReference>
<dbReference type="HAMAP" id="MF_00165">
    <property type="entry name" value="Thymidylate_kinase"/>
    <property type="match status" value="1"/>
</dbReference>
<dbReference type="InterPro" id="IPR027417">
    <property type="entry name" value="P-loop_NTPase"/>
</dbReference>
<dbReference type="InterPro" id="IPR039430">
    <property type="entry name" value="Thymidylate_kin-like_dom"/>
</dbReference>
<dbReference type="InterPro" id="IPR018095">
    <property type="entry name" value="Thymidylate_kin_CS"/>
</dbReference>
<dbReference type="InterPro" id="IPR018094">
    <property type="entry name" value="Thymidylate_kinase"/>
</dbReference>
<dbReference type="NCBIfam" id="TIGR00041">
    <property type="entry name" value="DTMP_kinase"/>
    <property type="match status" value="1"/>
</dbReference>
<dbReference type="PANTHER" id="PTHR10344">
    <property type="entry name" value="THYMIDYLATE KINASE"/>
    <property type="match status" value="1"/>
</dbReference>
<dbReference type="PANTHER" id="PTHR10344:SF4">
    <property type="entry name" value="UMP-CMP KINASE 2, MITOCHONDRIAL"/>
    <property type="match status" value="1"/>
</dbReference>
<dbReference type="Pfam" id="PF02223">
    <property type="entry name" value="Thymidylate_kin"/>
    <property type="match status" value="1"/>
</dbReference>
<dbReference type="SUPFAM" id="SSF52540">
    <property type="entry name" value="P-loop containing nucleoside triphosphate hydrolases"/>
    <property type="match status" value="1"/>
</dbReference>
<dbReference type="PROSITE" id="PS01331">
    <property type="entry name" value="THYMIDYLATE_KINASE"/>
    <property type="match status" value="1"/>
</dbReference>
<sequence>MNAKFIVIEGLEGAGKSTAIQVVVETLQQNGIDHITRTREPGGTLLAEKLRALVKEEHPGEELQDITELLLVYAARVQLVENVIKPALARGEWVVGDRHDMSSQAYQGGGRQIAPSTMQSLKQTALGDFKPDLTLYLDIDPKLGLERARGRGELDRIEKMDISFFERARERYLELANSDDSVVMIDAAQSIEQVTADIRRALQDWLSQVNRV</sequence>
<accession>Q9KQI2</accession>
<protein>
    <recommendedName>
        <fullName>Thymidylate kinase</fullName>
        <ecNumber>2.7.4.9</ecNumber>
    </recommendedName>
    <alternativeName>
        <fullName>dTMP kinase</fullName>
    </alternativeName>
</protein>
<evidence type="ECO:0000250" key="1"/>
<evidence type="ECO:0000255" key="2"/>
<evidence type="ECO:0000305" key="3"/>
<evidence type="ECO:0007829" key="4">
    <source>
        <dbReference type="PDB" id="3LV8"/>
    </source>
</evidence>
<keyword id="KW-0002">3D-structure</keyword>
<keyword id="KW-0067">ATP-binding</keyword>
<keyword id="KW-0418">Kinase</keyword>
<keyword id="KW-0545">Nucleotide biosynthesis</keyword>
<keyword id="KW-0547">Nucleotide-binding</keyword>
<keyword id="KW-1185">Reference proteome</keyword>
<keyword id="KW-0808">Transferase</keyword>
<proteinExistence type="evidence at protein level"/>
<name>KTHY_VIBCH</name>